<sequence length="673" mass="78517">MDELRDIRTTGPEDVLNSVDPYRYTSQIPNGKSNNGLNAKMNGNNTLTNMINRSIAKNMGQNASSGSMRRSMRQSLRNSLPRSSIGPQQQQQMNSTQNSTYHNTARDPRPLRDKNFQNLLQQEIFSYLTDQKFDVETNHPISLKSLKQPTQKDFIYMFKWLYLRLDPGYVFTKSLEHEVYSILRTIHYPYLATINKSQISAVGGSNWPKFVGMLHWLVIINKKLDECLEHLDVSINNQVTQDITVLNQPLKTAEEQEKKQEKYELMVERLFIDYITESYKSFLRLEDDYEPYLHDLELSFQRFVHIIETDIAQLTSTTEHLSVECESIVAKNYELKNIKEKNTGLEQEYKRLSHGVQITQAKSKEWPDKLKEIEDEIDKKKRDIRQVSLQIDELTSVLKRKNISGEEIEHKNKESDSISKSLDTVSSRLDQFTGLVRQQRLETESVYKNLQDTLKQYKSATEGLVIARKNLGDHIDESSIELVLPSDLMSEEMIGLTVEELIGDKKSFTDPIKKNLNKIAEDIKMRITNIQTENSKLQIKLEDLRNEITTKNEDLDQLEQQLSSIKSEYEEYRQESQSQLLSQNIKIEKLERKIQNARVESQQKISSIEREAEETRLKLEELKLLQNRERLELHNKVIQLIEYVSNFKINTQSSIEELQNATQKELQRLQTEV</sequence>
<keyword id="KW-0131">Cell cycle</keyword>
<keyword id="KW-0132">Cell division</keyword>
<keyword id="KW-0137">Centromere</keyword>
<keyword id="KW-0158">Chromosome</keyword>
<keyword id="KW-0175">Coiled coil</keyword>
<keyword id="KW-0995">Kinetochore</keyword>
<keyword id="KW-0498">Mitosis</keyword>
<keyword id="KW-0539">Nucleus</keyword>
<keyword id="KW-1185">Reference proteome</keyword>
<comment type="function">
    <text evidence="1">Acts as a component of the essential kinetochore-associated NDC80 complex, which is required for chromosome segregation and spindle checkpoint activity.</text>
</comment>
<comment type="subunit">
    <text evidence="1">Component of the NDC80 complex, which consists of NDC80, NUF2, SPC24 and SPC25.</text>
</comment>
<comment type="subcellular location">
    <subcellularLocation>
        <location evidence="1">Nucleus</location>
    </subcellularLocation>
    <subcellularLocation>
        <location evidence="1">Chromosome</location>
        <location evidence="1">Centromere</location>
        <location evidence="1">Kinetochore</location>
    </subcellularLocation>
    <text evidence="1">Associated with kinetochores.</text>
</comment>
<comment type="similarity">
    <text evidence="4">Belongs to the NDC80/HEC1 family.</text>
</comment>
<name>NDC80_KLULA</name>
<accession>Q6CNF3</accession>
<reference key="1">
    <citation type="journal article" date="2004" name="Nature">
        <title>Genome evolution in yeasts.</title>
        <authorList>
            <person name="Dujon B."/>
            <person name="Sherman D."/>
            <person name="Fischer G."/>
            <person name="Durrens P."/>
            <person name="Casaregola S."/>
            <person name="Lafontaine I."/>
            <person name="de Montigny J."/>
            <person name="Marck C."/>
            <person name="Neuveglise C."/>
            <person name="Talla E."/>
            <person name="Goffard N."/>
            <person name="Frangeul L."/>
            <person name="Aigle M."/>
            <person name="Anthouard V."/>
            <person name="Babour A."/>
            <person name="Barbe V."/>
            <person name="Barnay S."/>
            <person name="Blanchin S."/>
            <person name="Beckerich J.-M."/>
            <person name="Beyne E."/>
            <person name="Bleykasten C."/>
            <person name="Boisrame A."/>
            <person name="Boyer J."/>
            <person name="Cattolico L."/>
            <person name="Confanioleri F."/>
            <person name="de Daruvar A."/>
            <person name="Despons L."/>
            <person name="Fabre E."/>
            <person name="Fairhead C."/>
            <person name="Ferry-Dumazet H."/>
            <person name="Groppi A."/>
            <person name="Hantraye F."/>
            <person name="Hennequin C."/>
            <person name="Jauniaux N."/>
            <person name="Joyet P."/>
            <person name="Kachouri R."/>
            <person name="Kerrest A."/>
            <person name="Koszul R."/>
            <person name="Lemaire M."/>
            <person name="Lesur I."/>
            <person name="Ma L."/>
            <person name="Muller H."/>
            <person name="Nicaud J.-M."/>
            <person name="Nikolski M."/>
            <person name="Oztas S."/>
            <person name="Ozier-Kalogeropoulos O."/>
            <person name="Pellenz S."/>
            <person name="Potier S."/>
            <person name="Richard G.-F."/>
            <person name="Straub M.-L."/>
            <person name="Suleau A."/>
            <person name="Swennen D."/>
            <person name="Tekaia F."/>
            <person name="Wesolowski-Louvel M."/>
            <person name="Westhof E."/>
            <person name="Wirth B."/>
            <person name="Zeniou-Meyer M."/>
            <person name="Zivanovic Y."/>
            <person name="Bolotin-Fukuhara M."/>
            <person name="Thierry A."/>
            <person name="Bouchier C."/>
            <person name="Caudron B."/>
            <person name="Scarpelli C."/>
            <person name="Gaillardin C."/>
            <person name="Weissenbach J."/>
            <person name="Wincker P."/>
            <person name="Souciet J.-L."/>
        </authorList>
    </citation>
    <scope>NUCLEOTIDE SEQUENCE [LARGE SCALE GENOMIC DNA]</scope>
    <source>
        <strain>ATCC 8585 / CBS 2359 / DSM 70799 / NBRC 1267 / NRRL Y-1140 / WM37</strain>
    </source>
</reference>
<feature type="chain" id="PRO_0000246641" description="Probable kinetochore protein NDC80">
    <location>
        <begin position="1"/>
        <end position="673"/>
    </location>
</feature>
<feature type="region of interest" description="Disordered" evidence="3">
    <location>
        <begin position="1"/>
        <end position="39"/>
    </location>
</feature>
<feature type="region of interest" description="Disordered" evidence="3">
    <location>
        <begin position="60"/>
        <end position="111"/>
    </location>
</feature>
<feature type="coiled-coil region" evidence="2">
    <location>
        <begin position="328"/>
        <end position="402"/>
    </location>
</feature>
<feature type="coiled-coil region" evidence="2">
    <location>
        <begin position="436"/>
        <end position="464"/>
    </location>
</feature>
<feature type="coiled-coil region" evidence="2">
    <location>
        <begin position="513"/>
        <end position="673"/>
    </location>
</feature>
<feature type="compositionally biased region" description="Polar residues" evidence="3">
    <location>
        <begin position="24"/>
        <end position="33"/>
    </location>
</feature>
<feature type="compositionally biased region" description="Low complexity" evidence="3">
    <location>
        <begin position="64"/>
        <end position="80"/>
    </location>
</feature>
<feature type="compositionally biased region" description="Low complexity" evidence="3">
    <location>
        <begin position="88"/>
        <end position="100"/>
    </location>
</feature>
<proteinExistence type="inferred from homology"/>
<gene>
    <name type="primary">NDC80</name>
    <name type="ordered locus">KLLA0E13035g</name>
</gene>
<evidence type="ECO:0000250" key="1"/>
<evidence type="ECO:0000255" key="2"/>
<evidence type="ECO:0000256" key="3">
    <source>
        <dbReference type="SAM" id="MobiDB-lite"/>
    </source>
</evidence>
<evidence type="ECO:0000305" key="4"/>
<organism>
    <name type="scientific">Kluyveromyces lactis (strain ATCC 8585 / CBS 2359 / DSM 70799 / NBRC 1267 / NRRL Y-1140 / WM37)</name>
    <name type="common">Yeast</name>
    <name type="synonym">Candida sphaerica</name>
    <dbReference type="NCBI Taxonomy" id="284590"/>
    <lineage>
        <taxon>Eukaryota</taxon>
        <taxon>Fungi</taxon>
        <taxon>Dikarya</taxon>
        <taxon>Ascomycota</taxon>
        <taxon>Saccharomycotina</taxon>
        <taxon>Saccharomycetes</taxon>
        <taxon>Saccharomycetales</taxon>
        <taxon>Saccharomycetaceae</taxon>
        <taxon>Kluyveromyces</taxon>
    </lineage>
</organism>
<dbReference type="EMBL" id="CR382125">
    <property type="protein sequence ID" value="CAG99623.1"/>
    <property type="molecule type" value="Genomic_DNA"/>
</dbReference>
<dbReference type="RefSeq" id="XP_454536.1">
    <property type="nucleotide sequence ID" value="XM_454536.1"/>
</dbReference>
<dbReference type="SMR" id="Q6CNF3"/>
<dbReference type="FunCoup" id="Q6CNF3">
    <property type="interactions" value="346"/>
</dbReference>
<dbReference type="STRING" id="284590.Q6CNF3"/>
<dbReference type="PaxDb" id="284590-Q6CNF3"/>
<dbReference type="KEGG" id="kla:KLLA0_E13003g"/>
<dbReference type="eggNOG" id="KOG0995">
    <property type="taxonomic scope" value="Eukaryota"/>
</dbReference>
<dbReference type="HOGENOM" id="CLU_012583_1_2_1"/>
<dbReference type="InParanoid" id="Q6CNF3"/>
<dbReference type="OMA" id="PSHKFQK"/>
<dbReference type="Proteomes" id="UP000000598">
    <property type="component" value="Chromosome E"/>
</dbReference>
<dbReference type="GO" id="GO:0031262">
    <property type="term" value="C:Ndc80 complex"/>
    <property type="evidence" value="ECO:0000250"/>
    <property type="project" value="UniProtKB"/>
</dbReference>
<dbReference type="GO" id="GO:0005634">
    <property type="term" value="C:nucleus"/>
    <property type="evidence" value="ECO:0007669"/>
    <property type="project" value="UniProtKB-SubCell"/>
</dbReference>
<dbReference type="GO" id="GO:0008017">
    <property type="term" value="F:microtubule binding"/>
    <property type="evidence" value="ECO:0000250"/>
    <property type="project" value="UniProtKB"/>
</dbReference>
<dbReference type="GO" id="GO:0051301">
    <property type="term" value="P:cell division"/>
    <property type="evidence" value="ECO:0007669"/>
    <property type="project" value="UniProtKB-KW"/>
</dbReference>
<dbReference type="GO" id="GO:1990758">
    <property type="term" value="P:mitotic sister chromatid biorientation"/>
    <property type="evidence" value="ECO:0000250"/>
    <property type="project" value="UniProtKB"/>
</dbReference>
<dbReference type="FunFam" id="1.10.418.30:FF:000001">
    <property type="entry name" value="Probable kinetochore protein ndc80"/>
    <property type="match status" value="1"/>
</dbReference>
<dbReference type="Gene3D" id="1.10.418.30">
    <property type="entry name" value="Ncd80 complex, Ncd80 subunit"/>
    <property type="match status" value="1"/>
</dbReference>
<dbReference type="InterPro" id="IPR040967">
    <property type="entry name" value="DUF5595"/>
</dbReference>
<dbReference type="InterPro" id="IPR005550">
    <property type="entry name" value="Kinetochore_Ndc80"/>
</dbReference>
<dbReference type="InterPro" id="IPR055260">
    <property type="entry name" value="Ndc80_CH"/>
</dbReference>
<dbReference type="InterPro" id="IPR038273">
    <property type="entry name" value="Ndc80_sf"/>
</dbReference>
<dbReference type="PANTHER" id="PTHR10643">
    <property type="entry name" value="KINETOCHORE PROTEIN NDC80"/>
    <property type="match status" value="1"/>
</dbReference>
<dbReference type="PANTHER" id="PTHR10643:SF2">
    <property type="entry name" value="KINETOCHORE PROTEIN NDC80 HOMOLOG"/>
    <property type="match status" value="1"/>
</dbReference>
<dbReference type="Pfam" id="PF18077">
    <property type="entry name" value="DUF5595"/>
    <property type="match status" value="1"/>
</dbReference>
<dbReference type="Pfam" id="PF03801">
    <property type="entry name" value="Ndc80_HEC"/>
    <property type="match status" value="1"/>
</dbReference>
<protein>
    <recommendedName>
        <fullName>Probable kinetochore protein NDC80</fullName>
    </recommendedName>
</protein>